<accession>Q640K3</accession>
<sequence length="1128" mass="128954">MSRSVLQPSQQKLAEKLTILNDRGVGMLTRLYNIKKACGDPKAKPSYLIDKNLESAVKFIVRKFPAVETRNNNQQLAQLQKEKSEILKNLALYYFTFVDVMEFKDHVCELLNTIDVCQVFLDITVNFDLTKNYLDLIVTYTTLMIMLSRIEERKAIIGLYNYSHEMTHGASDREYPRLGQMIVDYENPLKKMMEEFVPHSKSLSDALISLQMVYPRRNLSAEQWRNAQLLSLISAPSTMLNPAQSDTMPCEYLSLDTMEKWIILGFILCHGILNTDATSLNLWKLALQSSSCICLYRDEVLHFHKAAEDLFVNIRGYNKRINDIRECKENAVSHAGATHRERRKFLRSALKELATVLSDQPGLLGPKALFVFMALSFARDEIIWLLRHADNIPKKIADDFMDKHIAELIFYMEELRAHVRKYGPVMQRYYVQYLSGFDAVVLNELVQNLSVCPEDESIIMSSFVNTMTSLSVKQVEDGEVFDFRGMRLDWFRLQAYTSVSKASLSLTDHRELGKMMNTIIFHTKMVDSLVEMLVETSDLSIFCFYSRAFEKMFQQCLELPSQSRYSISFPLLCTHFMSCTHELCPEERHHIGDRSLSLCNMFLDEMAKQARNLITDICTEQCTLSDQLLPKHCAKTISQAVNKKSKKQTGKKGEPEREKPGVESMRKNRLVVTNLDKLHTALSELCFSINYAPNMVVWEHTFTPREYLTSHLEIRFTKSIVGMTMYNQVTQEIAKPSELLTSVRAYMTVLQSIENYVQIDITRVFNNVLLQQTQHLDSHGEPTITSLYTNWYLETLLRQVSNGHIAYFPAMKAFVNLPTENELTFNAEEYSDISEMRALSELLGPYGMKFLSESLMWHISSQVAELKKLVVENVEVLTQMRTSFDKPEQMAAFFKRLTSVDSVLKRMTIIGVILSFRSLAQEALKDVLSYHIPFLVSSVEDFKDHIPRETDMKVAMNVYELSSAAGLPCEIDPALVVALSSQKSETISPEEEYKIACLLMVFVAVSLPTLASNVMSQYSPAIEGHCNNIHCLAKAINQIAAALFTIHKGSIEDRLKEFLALASSSLLKIGQETDKTTTRNRESVYLLLDMIVQESPFLTMDLLESCFPYVLLRNAYHAVYKQSVTSSS</sequence>
<comment type="function">
    <text evidence="1 4">Part of the WAVE complex that regulates lamellipodia formation. The WAVE complex regulates actin filament reorganization via its interaction with the Arp2/3 complex. Actin remodeling activity is regulated by RAC1 (By similarity). Plays a role in neural tube closure.</text>
</comment>
<comment type="subcellular location">
    <subcellularLocation>
        <location evidence="1">Cell membrane</location>
        <topology evidence="1">Single-pass membrane protein</topology>
        <orientation evidence="1">Cytoplasmic side</orientation>
    </subcellularLocation>
    <subcellularLocation>
        <location evidence="1">Cell projection</location>
        <location evidence="1">Lamellipodium membrane</location>
        <topology evidence="1">Single-pass membrane protein</topology>
        <orientation evidence="1">Cytoplasmic side</orientation>
    </subcellularLocation>
    <text evidence="1">At the interface between the lamellipodial actin meshwork and the membrane.</text>
</comment>
<comment type="similarity">
    <text evidence="5">Belongs to the HEM-1/HEM-2 family.</text>
</comment>
<proteinExistence type="evidence at transcript level"/>
<dbReference type="EMBL" id="BC082621">
    <property type="protein sequence ID" value="AAH82621.1"/>
    <property type="molecule type" value="mRNA"/>
</dbReference>
<dbReference type="RefSeq" id="NP_001087969.1">
    <property type="nucleotide sequence ID" value="NM_001094500.1"/>
</dbReference>
<dbReference type="SMR" id="Q640K3"/>
<dbReference type="DNASU" id="494653"/>
<dbReference type="GeneID" id="494653"/>
<dbReference type="KEGG" id="xla:494653"/>
<dbReference type="AGR" id="Xenbase:XB-GENE-949170"/>
<dbReference type="CTD" id="494653"/>
<dbReference type="Xenbase" id="XB-GENE-949170">
    <property type="gene designation" value="nckap1.L"/>
</dbReference>
<dbReference type="OrthoDB" id="548214at2759"/>
<dbReference type="Proteomes" id="UP000186698">
    <property type="component" value="Chromosome 9_10L"/>
</dbReference>
<dbReference type="Bgee" id="494653">
    <property type="expression patterns" value="Expressed in zone of skin and 19 other cell types or tissues"/>
</dbReference>
<dbReference type="GO" id="GO:0031258">
    <property type="term" value="C:lamellipodium membrane"/>
    <property type="evidence" value="ECO:0007669"/>
    <property type="project" value="UniProtKB-SubCell"/>
</dbReference>
<dbReference type="GO" id="GO:0031209">
    <property type="term" value="C:SCAR complex"/>
    <property type="evidence" value="ECO:0000318"/>
    <property type="project" value="GO_Central"/>
</dbReference>
<dbReference type="GO" id="GO:0016477">
    <property type="term" value="P:cell migration"/>
    <property type="evidence" value="ECO:0000318"/>
    <property type="project" value="GO_Central"/>
</dbReference>
<dbReference type="GO" id="GO:0000902">
    <property type="term" value="P:cell morphogenesis"/>
    <property type="evidence" value="ECO:0000318"/>
    <property type="project" value="GO_Central"/>
</dbReference>
<dbReference type="GO" id="GO:0030031">
    <property type="term" value="P:cell projection assembly"/>
    <property type="evidence" value="ECO:0000318"/>
    <property type="project" value="GO_Central"/>
</dbReference>
<dbReference type="GO" id="GO:0030866">
    <property type="term" value="P:cortical actin cytoskeleton organization"/>
    <property type="evidence" value="ECO:0000318"/>
    <property type="project" value="GO_Central"/>
</dbReference>
<dbReference type="GO" id="GO:0001843">
    <property type="term" value="P:neural tube closure"/>
    <property type="evidence" value="ECO:0000315"/>
    <property type="project" value="UniProtKB"/>
</dbReference>
<dbReference type="GO" id="GO:0048812">
    <property type="term" value="P:neuron projection morphogenesis"/>
    <property type="evidence" value="ECO:0000318"/>
    <property type="project" value="GO_Central"/>
</dbReference>
<dbReference type="InterPro" id="IPR019137">
    <property type="entry name" value="Nck-associated_protein-1"/>
</dbReference>
<dbReference type="PANTHER" id="PTHR12093">
    <property type="entry name" value="NCK-ASSOCIATED PROTEIN 1"/>
    <property type="match status" value="1"/>
</dbReference>
<dbReference type="PANTHER" id="PTHR12093:SF11">
    <property type="entry name" value="NCK-ASSOCIATED PROTEIN 1"/>
    <property type="match status" value="1"/>
</dbReference>
<dbReference type="Pfam" id="PF09735">
    <property type="entry name" value="Nckap1"/>
    <property type="match status" value="1"/>
</dbReference>
<protein>
    <recommendedName>
        <fullName>Nck-associated protein 1</fullName>
        <shortName>NAP 1</shortName>
    </recommendedName>
</protein>
<gene>
    <name type="primary">nckap1</name>
</gene>
<feature type="chain" id="PRO_0000364440" description="Nck-associated protein 1">
    <location>
        <begin position="1"/>
        <end position="1128"/>
    </location>
</feature>
<feature type="transmembrane region" description="Helical" evidence="2">
    <location>
        <begin position="995"/>
        <end position="1015"/>
    </location>
</feature>
<feature type="region of interest" description="Disordered" evidence="3">
    <location>
        <begin position="640"/>
        <end position="665"/>
    </location>
</feature>
<feature type="compositionally biased region" description="Basic and acidic residues" evidence="3">
    <location>
        <begin position="651"/>
        <end position="665"/>
    </location>
</feature>
<name>NCKP1_XENLA</name>
<organism>
    <name type="scientific">Xenopus laevis</name>
    <name type="common">African clawed frog</name>
    <dbReference type="NCBI Taxonomy" id="8355"/>
    <lineage>
        <taxon>Eukaryota</taxon>
        <taxon>Metazoa</taxon>
        <taxon>Chordata</taxon>
        <taxon>Craniata</taxon>
        <taxon>Vertebrata</taxon>
        <taxon>Euteleostomi</taxon>
        <taxon>Amphibia</taxon>
        <taxon>Batrachia</taxon>
        <taxon>Anura</taxon>
        <taxon>Pipoidea</taxon>
        <taxon>Pipidae</taxon>
        <taxon>Xenopodinae</taxon>
        <taxon>Xenopus</taxon>
        <taxon>Xenopus</taxon>
    </lineage>
</organism>
<reference key="1">
    <citation type="submission" date="2004-09" db="EMBL/GenBank/DDBJ databases">
        <authorList>
            <consortium name="NIH - Xenopus Gene Collection (XGC) project"/>
        </authorList>
    </citation>
    <scope>NUCLEOTIDE SEQUENCE [LARGE SCALE MRNA]</scope>
    <source>
        <tissue>Embryo</tissue>
    </source>
</reference>
<reference key="2">
    <citation type="journal article" date="2016" name="Genetics">
        <title>Identifying Regulators of Morphogenesis Common to Vertebrate Neural Tube Closure and Caenorhabditis elegans Gastrulation.</title>
        <authorList>
            <person name="Sullivan-Brown J.L."/>
            <person name="Tandon P."/>
            <person name="Bird K.E."/>
            <person name="Dickinson D.J."/>
            <person name="Tintori S.C."/>
            <person name="Heppert J.K."/>
            <person name="Meserve J.H."/>
            <person name="Trogden K.P."/>
            <person name="Orlowski S.K."/>
            <person name="Conlon F.L."/>
            <person name="Goldstein B."/>
        </authorList>
    </citation>
    <scope>FUNCTION</scope>
</reference>
<keyword id="KW-1003">Cell membrane</keyword>
<keyword id="KW-0966">Cell projection</keyword>
<keyword id="KW-0472">Membrane</keyword>
<keyword id="KW-1185">Reference proteome</keyword>
<keyword id="KW-0812">Transmembrane</keyword>
<keyword id="KW-1133">Transmembrane helix</keyword>
<evidence type="ECO:0000250" key="1"/>
<evidence type="ECO:0000255" key="2"/>
<evidence type="ECO:0000256" key="3">
    <source>
        <dbReference type="SAM" id="MobiDB-lite"/>
    </source>
</evidence>
<evidence type="ECO:0000269" key="4">
    <source>
    </source>
</evidence>
<evidence type="ECO:0000305" key="5"/>